<proteinExistence type="inferred from homology"/>
<dbReference type="EC" id="1.1.1.86" evidence="1"/>
<dbReference type="EMBL" id="CP001071">
    <property type="protein sequence ID" value="ACD05003.1"/>
    <property type="molecule type" value="Genomic_DNA"/>
</dbReference>
<dbReference type="RefSeq" id="WP_012420218.1">
    <property type="nucleotide sequence ID" value="NZ_CP071807.1"/>
</dbReference>
<dbReference type="SMR" id="B2URB8"/>
<dbReference type="STRING" id="349741.Amuc_1178"/>
<dbReference type="PaxDb" id="349741-Amuc_1178"/>
<dbReference type="GeneID" id="60880654"/>
<dbReference type="KEGG" id="amu:Amuc_1178"/>
<dbReference type="eggNOG" id="COG0059">
    <property type="taxonomic scope" value="Bacteria"/>
</dbReference>
<dbReference type="HOGENOM" id="CLU_033821_0_1_0"/>
<dbReference type="OrthoDB" id="9804088at2"/>
<dbReference type="BioCyc" id="AMUC349741:G1GBX-1255-MONOMER"/>
<dbReference type="UniPathway" id="UPA00047">
    <property type="reaction ID" value="UER00056"/>
</dbReference>
<dbReference type="UniPathway" id="UPA00049">
    <property type="reaction ID" value="UER00060"/>
</dbReference>
<dbReference type="Proteomes" id="UP000001031">
    <property type="component" value="Chromosome"/>
</dbReference>
<dbReference type="GO" id="GO:0005829">
    <property type="term" value="C:cytosol"/>
    <property type="evidence" value="ECO:0007669"/>
    <property type="project" value="TreeGrafter"/>
</dbReference>
<dbReference type="GO" id="GO:0004455">
    <property type="term" value="F:ketol-acid reductoisomerase activity"/>
    <property type="evidence" value="ECO:0007669"/>
    <property type="project" value="UniProtKB-UniRule"/>
</dbReference>
<dbReference type="GO" id="GO:0000287">
    <property type="term" value="F:magnesium ion binding"/>
    <property type="evidence" value="ECO:0007669"/>
    <property type="project" value="UniProtKB-UniRule"/>
</dbReference>
<dbReference type="GO" id="GO:0050661">
    <property type="term" value="F:NADP binding"/>
    <property type="evidence" value="ECO:0007669"/>
    <property type="project" value="InterPro"/>
</dbReference>
<dbReference type="GO" id="GO:0009097">
    <property type="term" value="P:isoleucine biosynthetic process"/>
    <property type="evidence" value="ECO:0007669"/>
    <property type="project" value="UniProtKB-UniRule"/>
</dbReference>
<dbReference type="GO" id="GO:0009099">
    <property type="term" value="P:L-valine biosynthetic process"/>
    <property type="evidence" value="ECO:0007669"/>
    <property type="project" value="UniProtKB-UniRule"/>
</dbReference>
<dbReference type="Gene3D" id="6.10.240.10">
    <property type="match status" value="1"/>
</dbReference>
<dbReference type="Gene3D" id="3.40.50.720">
    <property type="entry name" value="NAD(P)-binding Rossmann-like Domain"/>
    <property type="match status" value="1"/>
</dbReference>
<dbReference type="HAMAP" id="MF_00435">
    <property type="entry name" value="IlvC"/>
    <property type="match status" value="1"/>
</dbReference>
<dbReference type="InterPro" id="IPR008927">
    <property type="entry name" value="6-PGluconate_DH-like_C_sf"/>
</dbReference>
<dbReference type="InterPro" id="IPR013023">
    <property type="entry name" value="KARI"/>
</dbReference>
<dbReference type="InterPro" id="IPR000506">
    <property type="entry name" value="KARI_C"/>
</dbReference>
<dbReference type="InterPro" id="IPR013116">
    <property type="entry name" value="KARI_N"/>
</dbReference>
<dbReference type="InterPro" id="IPR014359">
    <property type="entry name" value="KARI_prok"/>
</dbReference>
<dbReference type="InterPro" id="IPR036291">
    <property type="entry name" value="NAD(P)-bd_dom_sf"/>
</dbReference>
<dbReference type="NCBIfam" id="TIGR00465">
    <property type="entry name" value="ilvC"/>
    <property type="match status" value="1"/>
</dbReference>
<dbReference type="NCBIfam" id="NF004017">
    <property type="entry name" value="PRK05479.1"/>
    <property type="match status" value="1"/>
</dbReference>
<dbReference type="PANTHER" id="PTHR21371">
    <property type="entry name" value="KETOL-ACID REDUCTOISOMERASE, MITOCHONDRIAL"/>
    <property type="match status" value="1"/>
</dbReference>
<dbReference type="PANTHER" id="PTHR21371:SF1">
    <property type="entry name" value="KETOL-ACID REDUCTOISOMERASE, MITOCHONDRIAL"/>
    <property type="match status" value="1"/>
</dbReference>
<dbReference type="Pfam" id="PF01450">
    <property type="entry name" value="KARI_C"/>
    <property type="match status" value="1"/>
</dbReference>
<dbReference type="Pfam" id="PF07991">
    <property type="entry name" value="KARI_N"/>
    <property type="match status" value="1"/>
</dbReference>
<dbReference type="PIRSF" id="PIRSF000116">
    <property type="entry name" value="IlvC_gammaproteo"/>
    <property type="match status" value="1"/>
</dbReference>
<dbReference type="SUPFAM" id="SSF48179">
    <property type="entry name" value="6-phosphogluconate dehydrogenase C-terminal domain-like"/>
    <property type="match status" value="1"/>
</dbReference>
<dbReference type="SUPFAM" id="SSF51735">
    <property type="entry name" value="NAD(P)-binding Rossmann-fold domains"/>
    <property type="match status" value="1"/>
</dbReference>
<dbReference type="PROSITE" id="PS51851">
    <property type="entry name" value="KARI_C"/>
    <property type="match status" value="1"/>
</dbReference>
<dbReference type="PROSITE" id="PS51850">
    <property type="entry name" value="KARI_N"/>
    <property type="match status" value="1"/>
</dbReference>
<gene>
    <name evidence="1" type="primary">ilvC</name>
    <name type="ordered locus">Amuc_1178</name>
</gene>
<reference key="1">
    <citation type="journal article" date="2011" name="PLoS ONE">
        <title>The genome of Akkermansia muciniphila, a dedicated intestinal mucin degrader, and its use in exploring intestinal metagenomes.</title>
        <authorList>
            <person name="van Passel M.W."/>
            <person name="Kant R."/>
            <person name="Zoetendal E.G."/>
            <person name="Plugge C.M."/>
            <person name="Derrien M."/>
            <person name="Malfatti S.A."/>
            <person name="Chain P.S."/>
            <person name="Woyke T."/>
            <person name="Palva A."/>
            <person name="de Vos W.M."/>
            <person name="Smidt H."/>
        </authorList>
    </citation>
    <scope>NUCLEOTIDE SEQUENCE [LARGE SCALE GENOMIC DNA]</scope>
    <source>
        <strain>ATCC BAA-835 / DSM 22959 / JCM 33894 / BCRC 81048 / CCUG 64013 / CIP 107961 / Muc</strain>
    </source>
</reference>
<evidence type="ECO:0000255" key="1">
    <source>
        <dbReference type="HAMAP-Rule" id="MF_00435"/>
    </source>
</evidence>
<evidence type="ECO:0000255" key="2">
    <source>
        <dbReference type="PROSITE-ProRule" id="PRU01197"/>
    </source>
</evidence>
<evidence type="ECO:0000255" key="3">
    <source>
        <dbReference type="PROSITE-ProRule" id="PRU01198"/>
    </source>
</evidence>
<keyword id="KW-0028">Amino-acid biosynthesis</keyword>
<keyword id="KW-0100">Branched-chain amino acid biosynthesis</keyword>
<keyword id="KW-0460">Magnesium</keyword>
<keyword id="KW-0479">Metal-binding</keyword>
<keyword id="KW-0521">NADP</keyword>
<keyword id="KW-0560">Oxidoreductase</keyword>
<keyword id="KW-1185">Reference proteome</keyword>
<sequence>MDIIHDNAADLSALNGKTVAVIGYGAQGRAQALCMRDSGVNVIIGVRPGKSFDAAAQDGFQVMSVAEAAEKADIIHILLPDESHGAVYEAEIKPHLKAGKTLCCSHGFAYVFNTIVPPADVDVIMVAPKGPGTEVRRVFEEGFGCPGLIAVHQNPSGKARDVALAMAKAEGLTRGGVLECTMAQETYEDLFGEQNVLCGGLVDLMKYGFETLTEAGYPPEMAYFECVHEAKLIVDLIYNGGIQKMNSVISNTAEFGEYYNGPQILPAEVKERMKESLKRIESGKFAKDWLEEAAKGAPNLKAKREALGQHPVEIVGAKIRSLFERN</sequence>
<organism>
    <name type="scientific">Akkermansia muciniphila (strain ATCC BAA-835 / DSM 22959 / JCM 33894 / BCRC 81048 / CCUG 64013 / CIP 107961 / Muc)</name>
    <dbReference type="NCBI Taxonomy" id="349741"/>
    <lineage>
        <taxon>Bacteria</taxon>
        <taxon>Pseudomonadati</taxon>
        <taxon>Verrucomicrobiota</taxon>
        <taxon>Verrucomicrobiia</taxon>
        <taxon>Verrucomicrobiales</taxon>
        <taxon>Akkermansiaceae</taxon>
        <taxon>Akkermansia</taxon>
    </lineage>
</organism>
<accession>B2URB8</accession>
<feature type="chain" id="PRO_1000190901" description="Ketol-acid reductoisomerase (NADP(+))">
    <location>
        <begin position="1"/>
        <end position="326"/>
    </location>
</feature>
<feature type="domain" description="KARI N-terminal Rossmann" evidence="2">
    <location>
        <begin position="1"/>
        <end position="180"/>
    </location>
</feature>
<feature type="domain" description="KARI C-terminal knotted" evidence="3">
    <location>
        <begin position="181"/>
        <end position="326"/>
    </location>
</feature>
<feature type="active site" evidence="1">
    <location>
        <position position="106"/>
    </location>
</feature>
<feature type="binding site" evidence="1">
    <location>
        <begin position="24"/>
        <end position="27"/>
    </location>
    <ligand>
        <name>NADP(+)</name>
        <dbReference type="ChEBI" id="CHEBI:58349"/>
    </ligand>
</feature>
<feature type="binding site" evidence="1">
    <location>
        <position position="47"/>
    </location>
    <ligand>
        <name>NADP(+)</name>
        <dbReference type="ChEBI" id="CHEBI:58349"/>
    </ligand>
</feature>
<feature type="binding site" evidence="1">
    <location>
        <position position="51"/>
    </location>
    <ligand>
        <name>NADP(+)</name>
        <dbReference type="ChEBI" id="CHEBI:58349"/>
    </ligand>
</feature>
<feature type="binding site" evidence="1">
    <location>
        <position position="132"/>
    </location>
    <ligand>
        <name>NADP(+)</name>
        <dbReference type="ChEBI" id="CHEBI:58349"/>
    </ligand>
</feature>
<feature type="binding site" evidence="1">
    <location>
        <position position="189"/>
    </location>
    <ligand>
        <name>Mg(2+)</name>
        <dbReference type="ChEBI" id="CHEBI:18420"/>
        <label>1</label>
    </ligand>
</feature>
<feature type="binding site" evidence="1">
    <location>
        <position position="189"/>
    </location>
    <ligand>
        <name>Mg(2+)</name>
        <dbReference type="ChEBI" id="CHEBI:18420"/>
        <label>2</label>
    </ligand>
</feature>
<feature type="binding site" evidence="1">
    <location>
        <position position="193"/>
    </location>
    <ligand>
        <name>Mg(2+)</name>
        <dbReference type="ChEBI" id="CHEBI:18420"/>
        <label>1</label>
    </ligand>
</feature>
<feature type="binding site" evidence="1">
    <location>
        <position position="225"/>
    </location>
    <ligand>
        <name>Mg(2+)</name>
        <dbReference type="ChEBI" id="CHEBI:18420"/>
        <label>2</label>
    </ligand>
</feature>
<feature type="binding site" evidence="1">
    <location>
        <position position="229"/>
    </location>
    <ligand>
        <name>Mg(2+)</name>
        <dbReference type="ChEBI" id="CHEBI:18420"/>
        <label>2</label>
    </ligand>
</feature>
<feature type="binding site" evidence="1">
    <location>
        <position position="250"/>
    </location>
    <ligand>
        <name>substrate</name>
    </ligand>
</feature>
<comment type="function">
    <text evidence="1">Involved in the biosynthesis of branched-chain amino acids (BCAA). Catalyzes an alkyl-migration followed by a ketol-acid reduction of (S)-2-acetolactate (S2AL) to yield (R)-2,3-dihydroxy-isovalerate. In the isomerase reaction, S2AL is rearranged via a Mg-dependent methyl migration to produce 3-hydroxy-3-methyl-2-ketobutyrate (HMKB). In the reductase reaction, this 2-ketoacid undergoes a metal-dependent reduction by NADPH to yield (R)-2,3-dihydroxy-isovalerate.</text>
</comment>
<comment type="catalytic activity">
    <reaction evidence="1">
        <text>(2R)-2,3-dihydroxy-3-methylbutanoate + NADP(+) = (2S)-2-acetolactate + NADPH + H(+)</text>
        <dbReference type="Rhea" id="RHEA:22068"/>
        <dbReference type="ChEBI" id="CHEBI:15378"/>
        <dbReference type="ChEBI" id="CHEBI:49072"/>
        <dbReference type="ChEBI" id="CHEBI:57783"/>
        <dbReference type="ChEBI" id="CHEBI:58349"/>
        <dbReference type="ChEBI" id="CHEBI:58476"/>
        <dbReference type="EC" id="1.1.1.86"/>
    </reaction>
</comment>
<comment type="catalytic activity">
    <reaction evidence="1">
        <text>(2R,3R)-2,3-dihydroxy-3-methylpentanoate + NADP(+) = (S)-2-ethyl-2-hydroxy-3-oxobutanoate + NADPH + H(+)</text>
        <dbReference type="Rhea" id="RHEA:13493"/>
        <dbReference type="ChEBI" id="CHEBI:15378"/>
        <dbReference type="ChEBI" id="CHEBI:49256"/>
        <dbReference type="ChEBI" id="CHEBI:49258"/>
        <dbReference type="ChEBI" id="CHEBI:57783"/>
        <dbReference type="ChEBI" id="CHEBI:58349"/>
        <dbReference type="EC" id="1.1.1.86"/>
    </reaction>
</comment>
<comment type="cofactor">
    <cofactor evidence="1">
        <name>Mg(2+)</name>
        <dbReference type="ChEBI" id="CHEBI:18420"/>
    </cofactor>
    <text evidence="1">Binds 2 magnesium ions per subunit.</text>
</comment>
<comment type="pathway">
    <text evidence="1">Amino-acid biosynthesis; L-isoleucine biosynthesis; L-isoleucine from 2-oxobutanoate: step 2/4.</text>
</comment>
<comment type="pathway">
    <text evidence="1">Amino-acid biosynthesis; L-valine biosynthesis; L-valine from pyruvate: step 2/4.</text>
</comment>
<comment type="similarity">
    <text evidence="1">Belongs to the ketol-acid reductoisomerase family.</text>
</comment>
<name>ILVC_AKKM8</name>
<protein>
    <recommendedName>
        <fullName evidence="1">Ketol-acid reductoisomerase (NADP(+))</fullName>
        <shortName evidence="1">KARI</shortName>
        <ecNumber evidence="1">1.1.1.86</ecNumber>
    </recommendedName>
    <alternativeName>
        <fullName evidence="1">Acetohydroxy-acid isomeroreductase</fullName>
        <shortName evidence="1">AHIR</shortName>
    </alternativeName>
    <alternativeName>
        <fullName evidence="1">Alpha-keto-beta-hydroxylacyl reductoisomerase</fullName>
    </alternativeName>
    <alternativeName>
        <fullName evidence="1">Ketol-acid reductoisomerase type 1</fullName>
    </alternativeName>
    <alternativeName>
        <fullName evidence="1">Ketol-acid reductoisomerase type I</fullName>
    </alternativeName>
</protein>